<organism>
    <name type="scientific">Clostridium acetobutylicum (strain ATCC 824 / DSM 792 / JCM 1419 / IAM 19013 / LMG 5710 / NBRC 13948 / NRRL B-527 / VKM B-1787 / 2291 / W)</name>
    <dbReference type="NCBI Taxonomy" id="272562"/>
    <lineage>
        <taxon>Bacteria</taxon>
        <taxon>Bacillati</taxon>
        <taxon>Bacillota</taxon>
        <taxon>Clostridia</taxon>
        <taxon>Eubacteriales</taxon>
        <taxon>Clostridiaceae</taxon>
        <taxon>Clostridium</taxon>
    </lineage>
</organism>
<evidence type="ECO:0000250" key="1"/>
<evidence type="ECO:0000255" key="2"/>
<evidence type="ECO:0000305" key="3"/>
<comment type="function">
    <text evidence="1">Probable aspartic protease that is responsible for the proteolytic cleavage of the RNA polymerase sigma E factor (SigE/spoIIGB) to yield the active peptide in the mother cell during sporulation. Responds to a signal from the forespore that is triggered by the extracellular signal protein SpoIIR (By similarity).</text>
</comment>
<comment type="subcellular location">
    <subcellularLocation>
        <location evidence="3">Cell membrane</location>
        <topology evidence="3">Multi-pass membrane protein</topology>
    </subcellularLocation>
</comment>
<comment type="similarity">
    <text evidence="3">Belongs to the peptidase U4 family.</text>
</comment>
<sequence>MVIYLDVLIFENSIVNTFLLYITAQTLRIKVKMRYLILAGIFGGLYVIVLVIPTLKIFSSLIFKIIAAFLMIIICFRKKSLRFNIKALAVLIMYSMVTAGLCFFIELNNTRGSYFNAFIGNVSYKWILIAIMIIYMFVNRIIWFINDRKLTQSLIYEIEICFKDNSKFINAFLDTGNELREPITNLPVIVVEKDMVSGIKWDDCPKFYVPFRLFNGKAGNLEAFKPSYVKIYIGDKVEVRNAIIALIDNKLSSLNDYNALLSRGSI</sequence>
<reference key="1">
    <citation type="journal article" date="1994" name="J. Bacteriol.">
        <title>Sporulation and primary sigma factor homologous genes in Clostridium acetobutylicum.</title>
        <authorList>
            <person name="Sauer U."/>
            <person name="Treuner A."/>
            <person name="Buchholz M."/>
            <person name="Santangelo J.D."/>
            <person name="Durre P."/>
        </authorList>
    </citation>
    <scope>NUCLEOTIDE SEQUENCE [GENOMIC DNA]</scope>
    <source>
        <strain>ATCC 824 / DSM 792 / JCM 1419 / IAM 19013 / LMG 5710 / NBRC 13948 / NRRL B-527 / VKM B-1787 / 2291 / W</strain>
    </source>
</reference>
<reference key="2">
    <citation type="journal article" date="1995" name="Gene">
        <title>Sequence and arrangement of genes encoding sigma factors in Clostridium acetobutylicum ATCC 824.</title>
        <authorList>
            <person name="Wong J."/>
            <person name="Sass C."/>
            <person name="Bennett G.N."/>
        </authorList>
    </citation>
    <scope>NUCLEOTIDE SEQUENCE [GENOMIC DNA]</scope>
    <source>
        <strain>ATCC 824 / DSM 792 / JCM 1419 / IAM 19013 / LMG 5710 / NBRC 13948 / NRRL B-527 / VKM B-1787 / 2291 / W</strain>
    </source>
</reference>
<reference key="3">
    <citation type="journal article" date="2001" name="J. Bacteriol.">
        <title>Genome sequence and comparative analysis of the solvent-producing bacterium Clostridium acetobutylicum.</title>
        <authorList>
            <person name="Noelling J."/>
            <person name="Breton G."/>
            <person name="Omelchenko M.V."/>
            <person name="Makarova K.S."/>
            <person name="Zeng Q."/>
            <person name="Gibson R."/>
            <person name="Lee H.M."/>
            <person name="Dubois J."/>
            <person name="Qiu D."/>
            <person name="Hitti J."/>
            <person name="Wolf Y.I."/>
            <person name="Tatusov R.L."/>
            <person name="Sabathe F."/>
            <person name="Doucette-Stamm L.A."/>
            <person name="Soucaille P."/>
            <person name="Daly M.J."/>
            <person name="Bennett G.N."/>
            <person name="Koonin E.V."/>
            <person name="Smith D.R."/>
        </authorList>
    </citation>
    <scope>NUCLEOTIDE SEQUENCE [LARGE SCALE GENOMIC DNA]</scope>
    <source>
        <strain>ATCC 824 / DSM 792 / JCM 1419 / IAM 19013 / LMG 5710 / NBRC 13948 / NRRL B-527 / VKM B-1787 / 2291 / W</strain>
    </source>
</reference>
<protein>
    <recommendedName>
        <fullName>Probable sporulation sigma-E factor-processing peptidase</fullName>
        <ecNumber>3.4.23.-</ecNumber>
    </recommendedName>
    <alternativeName>
        <fullName>Membrane-associated aspartic protease</fullName>
    </alternativeName>
    <alternativeName>
        <fullName>Stage II sporulation protein GA</fullName>
    </alternativeName>
</protein>
<dbReference type="EC" id="3.4.23.-"/>
<dbReference type="EMBL" id="Z23079">
    <property type="protein sequence ID" value="CAA80616.1"/>
    <property type="molecule type" value="Genomic_DNA"/>
</dbReference>
<dbReference type="EMBL" id="U07420">
    <property type="protein sequence ID" value="AAC43308.1"/>
    <property type="molecule type" value="Genomic_DNA"/>
</dbReference>
<dbReference type="EMBL" id="AE001437">
    <property type="protein sequence ID" value="AAK79660.1"/>
    <property type="molecule type" value="Genomic_DNA"/>
</dbReference>
<dbReference type="PIR" id="A97109">
    <property type="entry name" value="A97109"/>
</dbReference>
<dbReference type="PIR" id="I40626">
    <property type="entry name" value="I40626"/>
</dbReference>
<dbReference type="RefSeq" id="NP_348320.1">
    <property type="nucleotide sequence ID" value="NC_003030.1"/>
</dbReference>
<dbReference type="RefSeq" id="WP_010965001.1">
    <property type="nucleotide sequence ID" value="NC_003030.1"/>
</dbReference>
<dbReference type="STRING" id="272562.CA_C1694"/>
<dbReference type="GeneID" id="44998189"/>
<dbReference type="KEGG" id="cac:CA_C1694"/>
<dbReference type="PATRIC" id="fig|272562.8.peg.1897"/>
<dbReference type="eggNOG" id="ENOG50301AF">
    <property type="taxonomic scope" value="Bacteria"/>
</dbReference>
<dbReference type="HOGENOM" id="CLU_059158_0_0_9"/>
<dbReference type="OrthoDB" id="2690199at2"/>
<dbReference type="Proteomes" id="UP000000814">
    <property type="component" value="Chromosome"/>
</dbReference>
<dbReference type="GO" id="GO:0005886">
    <property type="term" value="C:plasma membrane"/>
    <property type="evidence" value="ECO:0007669"/>
    <property type="project" value="UniProtKB-SubCell"/>
</dbReference>
<dbReference type="GO" id="GO:0004190">
    <property type="term" value="F:aspartic-type endopeptidase activity"/>
    <property type="evidence" value="ECO:0007669"/>
    <property type="project" value="UniProtKB-KW"/>
</dbReference>
<dbReference type="GO" id="GO:0030436">
    <property type="term" value="P:asexual sporulation"/>
    <property type="evidence" value="ECO:0007669"/>
    <property type="project" value="InterPro"/>
</dbReference>
<dbReference type="GO" id="GO:0006508">
    <property type="term" value="P:proteolysis"/>
    <property type="evidence" value="ECO:0007669"/>
    <property type="project" value="UniProtKB-KW"/>
</dbReference>
<dbReference type="GO" id="GO:0030435">
    <property type="term" value="P:sporulation resulting in formation of a cellular spore"/>
    <property type="evidence" value="ECO:0007669"/>
    <property type="project" value="UniProtKB-KW"/>
</dbReference>
<dbReference type="InterPro" id="IPR005081">
    <property type="entry name" value="SpoIIGA"/>
</dbReference>
<dbReference type="NCBIfam" id="TIGR02854">
    <property type="entry name" value="spore_II_GA"/>
    <property type="match status" value="1"/>
</dbReference>
<dbReference type="Pfam" id="PF03419">
    <property type="entry name" value="Peptidase_U4"/>
    <property type="match status" value="1"/>
</dbReference>
<dbReference type="PIRSF" id="PIRSF018571">
    <property type="entry name" value="SpoIIGA"/>
    <property type="match status" value="1"/>
</dbReference>
<proteinExistence type="inferred from homology"/>
<keyword id="KW-0064">Aspartyl protease</keyword>
<keyword id="KW-1003">Cell membrane</keyword>
<keyword id="KW-0378">Hydrolase</keyword>
<keyword id="KW-0472">Membrane</keyword>
<keyword id="KW-0645">Protease</keyword>
<keyword id="KW-1185">Reference proteome</keyword>
<keyword id="KW-0749">Sporulation</keyword>
<keyword id="KW-0812">Transmembrane</keyword>
<keyword id="KW-1133">Transmembrane helix</keyword>
<accession>Q45832</accession>
<accession>Q45803</accession>
<name>SP2G_CLOAB</name>
<feature type="chain" id="PRO_0000079181" description="Probable sporulation sigma-E factor-processing peptidase">
    <location>
        <begin position="1"/>
        <end position="266"/>
    </location>
</feature>
<feature type="transmembrane region" description="Helical" evidence="2">
    <location>
        <begin position="36"/>
        <end position="52"/>
    </location>
</feature>
<feature type="transmembrane region" description="Helical" evidence="2">
    <location>
        <begin position="60"/>
        <end position="76"/>
    </location>
</feature>
<feature type="transmembrane region" description="Helical" evidence="2">
    <location>
        <begin position="89"/>
        <end position="105"/>
    </location>
</feature>
<feature type="transmembrane region" description="Helical" evidence="2">
    <location>
        <begin position="126"/>
        <end position="142"/>
    </location>
</feature>
<feature type="active site" evidence="1">
    <location>
        <position position="174"/>
    </location>
</feature>
<feature type="sequence conflict" description="In Ref. 2; AAC43308." evidence="3" ref="2">
    <original>N</original>
    <variation>Y</variation>
    <location>
        <position position="249"/>
    </location>
</feature>
<gene>
    <name type="primary">spoIIGA</name>
    <name type="ordered locus">CA_C1694</name>
</gene>